<keyword id="KW-0521">NADP</keyword>
<keyword id="KW-0560">Oxidoreductase</keyword>
<sequence>MSAKGVAIITGAAQGIGRAIVVRLAADGFDVAVNDLPNDAQVAKLTELAEEIRATGRKAIVVPGDISQEAIVEKIVADTVEQLGGVDVMVANAGICELSPIVSTSVEQWDTTQAVNLRGVFLCFKHAGKQMLAQGRPGRLIGGGSLGGFSGLPMGSAYAASKAGMRALTHSAARELGPSGITANSYAPGIVATPLTIGNYGQEFLDSQKATCAVNDNGTPEDIAALVSFLASKESRFITGQTIMIDGGRLNI</sequence>
<organism>
    <name type="scientific">Hericium erinaceus</name>
    <name type="common">Lion's mane mushroom</name>
    <name type="synonym">Hydnum erinaceus</name>
    <dbReference type="NCBI Taxonomy" id="91752"/>
    <lineage>
        <taxon>Eukaryota</taxon>
        <taxon>Fungi</taxon>
        <taxon>Dikarya</taxon>
        <taxon>Basidiomycota</taxon>
        <taxon>Agaricomycotina</taxon>
        <taxon>Agaricomycetes</taxon>
        <taxon>Russulales</taxon>
        <taxon>Hericiaceae</taxon>
        <taxon>Hericium</taxon>
    </lineage>
</organism>
<dbReference type="EC" id="1.1.1.-" evidence="5"/>
<dbReference type="EMBL" id="KY683783">
    <property type="protein sequence ID" value="ARE72245.1"/>
    <property type="molecule type" value="mRNA"/>
</dbReference>
<dbReference type="SMR" id="A0A1V0QSC6"/>
<dbReference type="BioCyc" id="MetaCyc:MONOMER-124260"/>
<dbReference type="GO" id="GO:0016616">
    <property type="term" value="F:oxidoreductase activity, acting on the CH-OH group of donors, NAD or NADP as acceptor"/>
    <property type="evidence" value="ECO:0007669"/>
    <property type="project" value="TreeGrafter"/>
</dbReference>
<dbReference type="GO" id="GO:0030497">
    <property type="term" value="P:fatty acid elongation"/>
    <property type="evidence" value="ECO:0007669"/>
    <property type="project" value="TreeGrafter"/>
</dbReference>
<dbReference type="FunFam" id="3.40.50.720:FF:000084">
    <property type="entry name" value="Short-chain dehydrogenase reductase"/>
    <property type="match status" value="1"/>
</dbReference>
<dbReference type="Gene3D" id="3.40.50.720">
    <property type="entry name" value="NAD(P)-binding Rossmann-like Domain"/>
    <property type="match status" value="1"/>
</dbReference>
<dbReference type="InterPro" id="IPR036291">
    <property type="entry name" value="NAD(P)-bd_dom_sf"/>
</dbReference>
<dbReference type="InterPro" id="IPR020904">
    <property type="entry name" value="Sc_DH/Rdtase_CS"/>
</dbReference>
<dbReference type="InterPro" id="IPR002347">
    <property type="entry name" value="SDR_fam"/>
</dbReference>
<dbReference type="PANTHER" id="PTHR42760:SF40">
    <property type="entry name" value="3-OXOACYL-[ACYL-CARRIER-PROTEIN] REDUCTASE, CHLOROPLASTIC"/>
    <property type="match status" value="1"/>
</dbReference>
<dbReference type="PANTHER" id="PTHR42760">
    <property type="entry name" value="SHORT-CHAIN DEHYDROGENASES/REDUCTASES FAMILY MEMBER"/>
    <property type="match status" value="1"/>
</dbReference>
<dbReference type="Pfam" id="PF13561">
    <property type="entry name" value="adh_short_C2"/>
    <property type="match status" value="1"/>
</dbReference>
<dbReference type="PRINTS" id="PR00081">
    <property type="entry name" value="GDHRDH"/>
</dbReference>
<dbReference type="PRINTS" id="PR00080">
    <property type="entry name" value="SDRFAMILY"/>
</dbReference>
<dbReference type="SUPFAM" id="SSF51735">
    <property type="entry name" value="NAD(P)-binding Rossmann-fold domains"/>
    <property type="match status" value="1"/>
</dbReference>
<dbReference type="PROSITE" id="PS00061">
    <property type="entry name" value="ADH_SHORT"/>
    <property type="match status" value="1"/>
</dbReference>
<comment type="function">
    <text evidence="4 5 8">Short-chain dehydrogenase/reductase; part of the gene cluster that mediates the biosynthesis of erinacines, cyathane-xylosides that show unique biological activities, including leishmanicidal activity, stimulating activity for nerve growth-factor synthesis, and agonistic activity toward the kappa opioid receptor (PubMed:28371074, PubMed:31535864). Within the pathway, eriH works with eriA to catalyze C-11 hydroxylation of cyathadiol to produce cyathatriol (PubMed:31535864). EriH also catalyzes oxidation of 11-O-acetyl-cyathatriol into 1-O-acetylcyathin A3 (PubMed:31535864). In the absence of eriL and eriJ, the SDR eriH is able to convert cyathatriol to cyathin A3; this is likely a switching mechanism in the biosynthesis of cyathins (C-14 ketogroup)and erinacines (C-14 glycosylated group) (PubMed:31535864). The first step of the erinacines biosynthesis pathway is catalyzed by the geranylgeranyl diphosphate (GGPP) synthase eriE via conversion of farnesyl pyrophosphate and isopentyl pyrophosphate into geranylgeranyl pyrophosphate (GGPP). GGPP is then substrate of the diterpene cyclase eriG for the production of cyatha-3,12-diene. The cytochrome P450 monooxygenase eriI then hydroxylates cyatha-3,12-diene at C-14 of the seven-membered ring to produce erinacol, which is further hydroxylated at C-15 by the cytochrome P450 monooxygenase eriC to yield cyathadiol. The cytochrome P450 monooxygenase eriA then catalyzes C-11 hydroxylation in the presence of the short chain dehydrogenase/reductase (SDR) eriH, which leads to the production of cyathatriol. The acetyltransferase eriL converts cyathatriol into 11-O-acetyl-cyathatriol. The SDR eriH catalyzes further oxidation of 11-O-acetyl-cyathatriol into 1-O-acetylcyathin A3. Finally, the glycosyl transferase eriJ tranfers xylose from UDP-xylose onto C-14 of 11-O-acetyl-cyathatriol to form eracine Q. EriJ is also able to convert 11-O-acetyl-cyathatriol to eracine Q2 by using UDP-D-glucose as cosubstrate, but at a lower rate (Probable).</text>
</comment>
<comment type="catalytic activity">
    <reaction evidence="5">
        <text>cyathadiol + reduced [NADPH--hemoprotein reductase] + O2 = cyathatriol + oxidized [NADPH--hemoprotein reductase] + H2O + H(+)</text>
        <dbReference type="Rhea" id="RHEA:75563"/>
        <dbReference type="Rhea" id="RHEA-COMP:11964"/>
        <dbReference type="Rhea" id="RHEA-COMP:11965"/>
        <dbReference type="ChEBI" id="CHEBI:15377"/>
        <dbReference type="ChEBI" id="CHEBI:15378"/>
        <dbReference type="ChEBI" id="CHEBI:15379"/>
        <dbReference type="ChEBI" id="CHEBI:57618"/>
        <dbReference type="ChEBI" id="CHEBI:58210"/>
        <dbReference type="ChEBI" id="CHEBI:194346"/>
        <dbReference type="ChEBI" id="CHEBI:194349"/>
    </reaction>
    <physiologicalReaction direction="left-to-right" evidence="5">
        <dbReference type="Rhea" id="RHEA:75564"/>
    </physiologicalReaction>
</comment>
<comment type="catalytic activity">
    <reaction evidence="5">
        <text>11-O-acetylcyathatriol + A = 11-O-acetylcyathin A3 + AH2</text>
        <dbReference type="Rhea" id="RHEA:75575"/>
        <dbReference type="ChEBI" id="CHEBI:13193"/>
        <dbReference type="ChEBI" id="CHEBI:17499"/>
        <dbReference type="ChEBI" id="CHEBI:194354"/>
        <dbReference type="ChEBI" id="CHEBI:194355"/>
    </reaction>
    <physiologicalReaction direction="left-to-right" evidence="5">
        <dbReference type="Rhea" id="RHEA:75576"/>
    </physiologicalReaction>
</comment>
<comment type="catalytic activity">
    <reaction evidence="5">
        <text>cyathatriol + A = cyathin A3 + AH2</text>
        <dbReference type="Rhea" id="RHEA:75579"/>
        <dbReference type="ChEBI" id="CHEBI:3985"/>
        <dbReference type="ChEBI" id="CHEBI:13193"/>
        <dbReference type="ChEBI" id="CHEBI:17499"/>
        <dbReference type="ChEBI" id="CHEBI:194349"/>
    </reaction>
    <physiologicalReaction direction="left-to-right" evidence="5">
        <dbReference type="Rhea" id="RHEA:75580"/>
    </physiologicalReaction>
</comment>
<comment type="pathway">
    <text evidence="5">Secondary metabolite biosynthesis.</text>
</comment>
<comment type="similarity">
    <text evidence="7">Belongs to the short-chain dehydrogenases/reductases (SDR) family.</text>
</comment>
<gene>
    <name evidence="6" type="primary">eriH</name>
</gene>
<evidence type="ECO:0000250" key="1">
    <source>
        <dbReference type="UniProtKB" id="L0E2Z4"/>
    </source>
</evidence>
<evidence type="ECO:0000250" key="2">
    <source>
        <dbReference type="UniProtKB" id="O93868"/>
    </source>
</evidence>
<evidence type="ECO:0000255" key="3">
    <source>
        <dbReference type="PROSITE-ProRule" id="PRU10001"/>
    </source>
</evidence>
<evidence type="ECO:0000269" key="4">
    <source>
    </source>
</evidence>
<evidence type="ECO:0000269" key="5">
    <source>
    </source>
</evidence>
<evidence type="ECO:0000303" key="6">
    <source>
    </source>
</evidence>
<evidence type="ECO:0000305" key="7"/>
<evidence type="ECO:0000305" key="8">
    <source>
    </source>
</evidence>
<name>ERIH_HERER</name>
<proteinExistence type="evidence at protein level"/>
<accession>A0A1V0QSC6</accession>
<protein>
    <recommendedName>
        <fullName evidence="6">Short-chain dehydrogenase/reductase eriH</fullName>
        <ecNumber evidence="5">1.1.1.-</ecNumber>
    </recommendedName>
    <alternativeName>
        <fullName evidence="6">Erinacine biosynthesis cluster protein H</fullName>
    </alternativeName>
</protein>
<feature type="chain" id="PRO_0000452922" description="Short-chain dehydrogenase/reductase eriH">
    <location>
        <begin position="1"/>
        <end position="252"/>
    </location>
</feature>
<feature type="active site" description="Proton acceptor" evidence="3">
    <location>
        <position position="158"/>
    </location>
</feature>
<feature type="active site" description="Proton donor" evidence="2">
    <location>
        <position position="158"/>
    </location>
</feature>
<feature type="active site" description="Lowers pKa of active site Tyr" evidence="2">
    <location>
        <position position="162"/>
    </location>
</feature>
<feature type="binding site" evidence="1">
    <location>
        <position position="16"/>
    </location>
    <ligand>
        <name>NADP(+)</name>
        <dbReference type="ChEBI" id="CHEBI:58349"/>
    </ligand>
</feature>
<feature type="binding site" evidence="1">
    <location>
        <position position="65"/>
    </location>
    <ligand>
        <name>NADP(+)</name>
        <dbReference type="ChEBI" id="CHEBI:58349"/>
    </ligand>
</feature>
<feature type="binding site" evidence="2">
    <location>
        <position position="92"/>
    </location>
    <ligand>
        <name>NADP(+)</name>
        <dbReference type="ChEBI" id="CHEBI:58349"/>
    </ligand>
</feature>
<feature type="binding site" evidence="1">
    <location>
        <position position="125"/>
    </location>
    <ligand>
        <name>NADP(+)</name>
        <dbReference type="ChEBI" id="CHEBI:58349"/>
    </ligand>
</feature>
<feature type="binding site" evidence="2">
    <location>
        <position position="158"/>
    </location>
    <ligand>
        <name>NADP(+)</name>
        <dbReference type="ChEBI" id="CHEBI:58349"/>
    </ligand>
</feature>
<feature type="binding site" evidence="2">
    <location>
        <position position="162"/>
    </location>
    <ligand>
        <name>NADP(+)</name>
        <dbReference type="ChEBI" id="CHEBI:58349"/>
    </ligand>
</feature>
<feature type="binding site" evidence="2">
    <location>
        <position position="191"/>
    </location>
    <ligand>
        <name>NADP(+)</name>
        <dbReference type="ChEBI" id="CHEBI:58349"/>
    </ligand>
</feature>
<feature type="binding site" evidence="1">
    <location>
        <position position="193"/>
    </location>
    <ligand>
        <name>NADP(+)</name>
        <dbReference type="ChEBI" id="CHEBI:58349"/>
    </ligand>
</feature>
<reference key="1">
    <citation type="journal article" date="2017" name="Angew. Chem. Int. Ed.">
        <title>Discovery and characterization of a new family of diterpene cyclases in bacteria and fungi.</title>
        <authorList>
            <person name="Yang Y.L."/>
            <person name="Zhang S."/>
            <person name="Ma K."/>
            <person name="Xu Y."/>
            <person name="Tao Q."/>
            <person name="Chen Y."/>
            <person name="Chen J."/>
            <person name="Guo S."/>
            <person name="Ren J."/>
            <person name="Wang W."/>
            <person name="Tao Y."/>
            <person name="Yin W.B."/>
            <person name="Liu H."/>
        </authorList>
    </citation>
    <scope>NUCLEOTIDE SEQUENCE [MRNA]</scope>
    <scope>FUNCTION</scope>
</reference>
<reference key="2">
    <citation type="journal article" date="2019" name="J. Am. Chem. Soc.">
        <title>Efficient reconstitution of basidiomycota diterpene erinacine gene cluster in ascomycota host Aspergillus oryzae based on genomic DNA sequences.</title>
        <authorList>
            <person name="Liu C."/>
            <person name="Minami A."/>
            <person name="Ozaki T."/>
            <person name="Wu J."/>
            <person name="Kawagishi H."/>
            <person name="Maruyama J.I."/>
            <person name="Oikawa H."/>
        </authorList>
    </citation>
    <scope>FUNCTION</scope>
    <scope>CATALYTIC ACTIVITY</scope>
    <scope>PATHWAY</scope>
</reference>